<dbReference type="EC" id="2.5.1.6" evidence="1"/>
<dbReference type="EMBL" id="CP000469">
    <property type="protein sequence ID" value="ABK49578.1"/>
    <property type="molecule type" value="Genomic_DNA"/>
</dbReference>
<dbReference type="RefSeq" id="WP_011621567.1">
    <property type="nucleotide sequence ID" value="NC_008577.1"/>
</dbReference>
<dbReference type="SMR" id="A0L0K9"/>
<dbReference type="STRING" id="94122.Shewana3_3354"/>
<dbReference type="GeneID" id="94729279"/>
<dbReference type="KEGG" id="shn:Shewana3_3354"/>
<dbReference type="eggNOG" id="COG0192">
    <property type="taxonomic scope" value="Bacteria"/>
</dbReference>
<dbReference type="HOGENOM" id="CLU_041802_1_1_6"/>
<dbReference type="OrthoDB" id="9801686at2"/>
<dbReference type="UniPathway" id="UPA00315">
    <property type="reaction ID" value="UER00080"/>
</dbReference>
<dbReference type="Proteomes" id="UP000002589">
    <property type="component" value="Chromosome"/>
</dbReference>
<dbReference type="GO" id="GO:0005737">
    <property type="term" value="C:cytoplasm"/>
    <property type="evidence" value="ECO:0007669"/>
    <property type="project" value="UniProtKB-SubCell"/>
</dbReference>
<dbReference type="GO" id="GO:0005524">
    <property type="term" value="F:ATP binding"/>
    <property type="evidence" value="ECO:0007669"/>
    <property type="project" value="UniProtKB-UniRule"/>
</dbReference>
<dbReference type="GO" id="GO:0000287">
    <property type="term" value="F:magnesium ion binding"/>
    <property type="evidence" value="ECO:0007669"/>
    <property type="project" value="UniProtKB-UniRule"/>
</dbReference>
<dbReference type="GO" id="GO:0004478">
    <property type="term" value="F:methionine adenosyltransferase activity"/>
    <property type="evidence" value="ECO:0007669"/>
    <property type="project" value="UniProtKB-UniRule"/>
</dbReference>
<dbReference type="GO" id="GO:0006730">
    <property type="term" value="P:one-carbon metabolic process"/>
    <property type="evidence" value="ECO:0007669"/>
    <property type="project" value="UniProtKB-KW"/>
</dbReference>
<dbReference type="GO" id="GO:0006556">
    <property type="term" value="P:S-adenosylmethionine biosynthetic process"/>
    <property type="evidence" value="ECO:0007669"/>
    <property type="project" value="UniProtKB-UniRule"/>
</dbReference>
<dbReference type="CDD" id="cd18079">
    <property type="entry name" value="S-AdoMet_synt"/>
    <property type="match status" value="1"/>
</dbReference>
<dbReference type="FunFam" id="3.30.300.10:FF:000001">
    <property type="entry name" value="S-adenosylmethionine synthase"/>
    <property type="match status" value="1"/>
</dbReference>
<dbReference type="FunFam" id="3.30.300.10:FF:000003">
    <property type="entry name" value="S-adenosylmethionine synthase"/>
    <property type="match status" value="1"/>
</dbReference>
<dbReference type="FunFam" id="3.30.300.10:FF:000004">
    <property type="entry name" value="S-adenosylmethionine synthase"/>
    <property type="match status" value="1"/>
</dbReference>
<dbReference type="Gene3D" id="3.30.300.10">
    <property type="match status" value="3"/>
</dbReference>
<dbReference type="HAMAP" id="MF_00086">
    <property type="entry name" value="S_AdoMet_synth1"/>
    <property type="match status" value="1"/>
</dbReference>
<dbReference type="InterPro" id="IPR022631">
    <property type="entry name" value="ADOMET_SYNTHASE_CS"/>
</dbReference>
<dbReference type="InterPro" id="IPR022630">
    <property type="entry name" value="S-AdoMet_synt_C"/>
</dbReference>
<dbReference type="InterPro" id="IPR022629">
    <property type="entry name" value="S-AdoMet_synt_central"/>
</dbReference>
<dbReference type="InterPro" id="IPR022628">
    <property type="entry name" value="S-AdoMet_synt_N"/>
</dbReference>
<dbReference type="InterPro" id="IPR002133">
    <property type="entry name" value="S-AdoMet_synthetase"/>
</dbReference>
<dbReference type="InterPro" id="IPR022636">
    <property type="entry name" value="S-AdoMet_synthetase_sfam"/>
</dbReference>
<dbReference type="NCBIfam" id="TIGR01034">
    <property type="entry name" value="metK"/>
    <property type="match status" value="1"/>
</dbReference>
<dbReference type="PANTHER" id="PTHR11964">
    <property type="entry name" value="S-ADENOSYLMETHIONINE SYNTHETASE"/>
    <property type="match status" value="1"/>
</dbReference>
<dbReference type="Pfam" id="PF02773">
    <property type="entry name" value="S-AdoMet_synt_C"/>
    <property type="match status" value="1"/>
</dbReference>
<dbReference type="Pfam" id="PF02772">
    <property type="entry name" value="S-AdoMet_synt_M"/>
    <property type="match status" value="1"/>
</dbReference>
<dbReference type="Pfam" id="PF00438">
    <property type="entry name" value="S-AdoMet_synt_N"/>
    <property type="match status" value="1"/>
</dbReference>
<dbReference type="PIRSF" id="PIRSF000497">
    <property type="entry name" value="MAT"/>
    <property type="match status" value="1"/>
</dbReference>
<dbReference type="SUPFAM" id="SSF55973">
    <property type="entry name" value="S-adenosylmethionine synthetase"/>
    <property type="match status" value="3"/>
</dbReference>
<dbReference type="PROSITE" id="PS00376">
    <property type="entry name" value="ADOMET_SYNTHASE_1"/>
    <property type="match status" value="1"/>
</dbReference>
<dbReference type="PROSITE" id="PS00377">
    <property type="entry name" value="ADOMET_SYNTHASE_2"/>
    <property type="match status" value="1"/>
</dbReference>
<gene>
    <name evidence="1" type="primary">metK</name>
    <name type="ordered locus">Shewana3_3354</name>
</gene>
<feature type="chain" id="PRO_0000302978" description="S-adenosylmethionine synthase">
    <location>
        <begin position="1"/>
        <end position="383"/>
    </location>
</feature>
<feature type="region of interest" description="Flexible loop" evidence="1">
    <location>
        <begin position="99"/>
        <end position="109"/>
    </location>
</feature>
<feature type="binding site" description="in other chain" evidence="1">
    <location>
        <position position="15"/>
    </location>
    <ligand>
        <name>ATP</name>
        <dbReference type="ChEBI" id="CHEBI:30616"/>
        <note>ligand shared between two neighboring subunits</note>
    </ligand>
</feature>
<feature type="binding site" evidence="1">
    <location>
        <position position="17"/>
    </location>
    <ligand>
        <name>Mg(2+)</name>
        <dbReference type="ChEBI" id="CHEBI:18420"/>
    </ligand>
</feature>
<feature type="binding site" evidence="1">
    <location>
        <position position="43"/>
    </location>
    <ligand>
        <name>K(+)</name>
        <dbReference type="ChEBI" id="CHEBI:29103"/>
    </ligand>
</feature>
<feature type="binding site" description="in other chain" evidence="1">
    <location>
        <position position="56"/>
    </location>
    <ligand>
        <name>L-methionine</name>
        <dbReference type="ChEBI" id="CHEBI:57844"/>
        <note>ligand shared between two neighboring subunits</note>
    </ligand>
</feature>
<feature type="binding site" description="in other chain" evidence="1">
    <location>
        <position position="99"/>
    </location>
    <ligand>
        <name>L-methionine</name>
        <dbReference type="ChEBI" id="CHEBI:57844"/>
        <note>ligand shared between two neighboring subunits</note>
    </ligand>
</feature>
<feature type="binding site" description="in other chain" evidence="1">
    <location>
        <begin position="164"/>
        <end position="166"/>
    </location>
    <ligand>
        <name>ATP</name>
        <dbReference type="ChEBI" id="CHEBI:30616"/>
        <note>ligand shared between two neighboring subunits</note>
    </ligand>
</feature>
<feature type="binding site" description="in other chain" evidence="1">
    <location>
        <begin position="230"/>
        <end position="231"/>
    </location>
    <ligand>
        <name>ATP</name>
        <dbReference type="ChEBI" id="CHEBI:30616"/>
        <note>ligand shared between two neighboring subunits</note>
    </ligand>
</feature>
<feature type="binding site" evidence="1">
    <location>
        <position position="239"/>
    </location>
    <ligand>
        <name>ATP</name>
        <dbReference type="ChEBI" id="CHEBI:30616"/>
        <note>ligand shared between two neighboring subunits</note>
    </ligand>
</feature>
<feature type="binding site" evidence="1">
    <location>
        <position position="239"/>
    </location>
    <ligand>
        <name>L-methionine</name>
        <dbReference type="ChEBI" id="CHEBI:57844"/>
        <note>ligand shared between two neighboring subunits</note>
    </ligand>
</feature>
<feature type="binding site" description="in other chain" evidence="1">
    <location>
        <begin position="245"/>
        <end position="246"/>
    </location>
    <ligand>
        <name>ATP</name>
        <dbReference type="ChEBI" id="CHEBI:30616"/>
        <note>ligand shared between two neighboring subunits</note>
    </ligand>
</feature>
<feature type="binding site" evidence="1">
    <location>
        <position position="262"/>
    </location>
    <ligand>
        <name>ATP</name>
        <dbReference type="ChEBI" id="CHEBI:30616"/>
        <note>ligand shared between two neighboring subunits</note>
    </ligand>
</feature>
<feature type="binding site" evidence="1">
    <location>
        <position position="266"/>
    </location>
    <ligand>
        <name>ATP</name>
        <dbReference type="ChEBI" id="CHEBI:30616"/>
        <note>ligand shared between two neighboring subunits</note>
    </ligand>
</feature>
<feature type="binding site" description="in other chain" evidence="1">
    <location>
        <position position="270"/>
    </location>
    <ligand>
        <name>L-methionine</name>
        <dbReference type="ChEBI" id="CHEBI:57844"/>
        <note>ligand shared between two neighboring subunits</note>
    </ligand>
</feature>
<reference key="1">
    <citation type="submission" date="2006-09" db="EMBL/GenBank/DDBJ databases">
        <title>Complete sequence of chromosome 1 of Shewanella sp. ANA-3.</title>
        <authorList>
            <person name="Copeland A."/>
            <person name="Lucas S."/>
            <person name="Lapidus A."/>
            <person name="Barry K."/>
            <person name="Detter J.C."/>
            <person name="Glavina del Rio T."/>
            <person name="Hammon N."/>
            <person name="Israni S."/>
            <person name="Dalin E."/>
            <person name="Tice H."/>
            <person name="Pitluck S."/>
            <person name="Chertkov O."/>
            <person name="Brettin T."/>
            <person name="Bruce D."/>
            <person name="Han C."/>
            <person name="Tapia R."/>
            <person name="Gilna P."/>
            <person name="Schmutz J."/>
            <person name="Larimer F."/>
            <person name="Land M."/>
            <person name="Hauser L."/>
            <person name="Kyrpides N."/>
            <person name="Kim E."/>
            <person name="Newman D."/>
            <person name="Salticov C."/>
            <person name="Konstantinidis K."/>
            <person name="Klappenback J."/>
            <person name="Tiedje J."/>
            <person name="Richardson P."/>
        </authorList>
    </citation>
    <scope>NUCLEOTIDE SEQUENCE [LARGE SCALE GENOMIC DNA]</scope>
    <source>
        <strain>ANA-3</strain>
    </source>
</reference>
<proteinExistence type="inferred from homology"/>
<organism>
    <name type="scientific">Shewanella sp. (strain ANA-3)</name>
    <dbReference type="NCBI Taxonomy" id="94122"/>
    <lineage>
        <taxon>Bacteria</taxon>
        <taxon>Pseudomonadati</taxon>
        <taxon>Pseudomonadota</taxon>
        <taxon>Gammaproteobacteria</taxon>
        <taxon>Alteromonadales</taxon>
        <taxon>Shewanellaceae</taxon>
        <taxon>Shewanella</taxon>
    </lineage>
</organism>
<comment type="function">
    <text evidence="1">Catalyzes the formation of S-adenosylmethionine (AdoMet) from methionine and ATP. The overall synthetic reaction is composed of two sequential steps, AdoMet formation and the subsequent tripolyphosphate hydrolysis which occurs prior to release of AdoMet from the enzyme.</text>
</comment>
<comment type="catalytic activity">
    <reaction evidence="1">
        <text>L-methionine + ATP + H2O = S-adenosyl-L-methionine + phosphate + diphosphate</text>
        <dbReference type="Rhea" id="RHEA:21080"/>
        <dbReference type="ChEBI" id="CHEBI:15377"/>
        <dbReference type="ChEBI" id="CHEBI:30616"/>
        <dbReference type="ChEBI" id="CHEBI:33019"/>
        <dbReference type="ChEBI" id="CHEBI:43474"/>
        <dbReference type="ChEBI" id="CHEBI:57844"/>
        <dbReference type="ChEBI" id="CHEBI:59789"/>
        <dbReference type="EC" id="2.5.1.6"/>
    </reaction>
</comment>
<comment type="cofactor">
    <cofactor evidence="1">
        <name>Mg(2+)</name>
        <dbReference type="ChEBI" id="CHEBI:18420"/>
    </cofactor>
    <text evidence="1">Binds 2 divalent ions per subunit.</text>
</comment>
<comment type="cofactor">
    <cofactor evidence="1">
        <name>K(+)</name>
        <dbReference type="ChEBI" id="CHEBI:29103"/>
    </cofactor>
    <text evidence="1">Binds 1 potassium ion per subunit.</text>
</comment>
<comment type="pathway">
    <text evidence="1">Amino-acid biosynthesis; S-adenosyl-L-methionine biosynthesis; S-adenosyl-L-methionine from L-methionine: step 1/1.</text>
</comment>
<comment type="subunit">
    <text evidence="1">Homotetramer; dimer of dimers.</text>
</comment>
<comment type="subcellular location">
    <subcellularLocation>
        <location evidence="1">Cytoplasm</location>
    </subcellularLocation>
</comment>
<comment type="similarity">
    <text evidence="1">Belongs to the AdoMet synthase family.</text>
</comment>
<name>METK_SHESA</name>
<accession>A0L0K9</accession>
<keyword id="KW-0067">ATP-binding</keyword>
<keyword id="KW-0963">Cytoplasm</keyword>
<keyword id="KW-0460">Magnesium</keyword>
<keyword id="KW-0479">Metal-binding</keyword>
<keyword id="KW-0547">Nucleotide-binding</keyword>
<keyword id="KW-0554">One-carbon metabolism</keyword>
<keyword id="KW-0630">Potassium</keyword>
<keyword id="KW-0808">Transferase</keyword>
<protein>
    <recommendedName>
        <fullName evidence="1">S-adenosylmethionine synthase</fullName>
        <shortName evidence="1">AdoMet synthase</shortName>
        <ecNumber evidence="1">2.5.1.6</ecNumber>
    </recommendedName>
    <alternativeName>
        <fullName evidence="1">MAT</fullName>
    </alternativeName>
    <alternativeName>
        <fullName evidence="1">Methionine adenosyltransferase</fullName>
    </alternativeName>
</protein>
<evidence type="ECO:0000255" key="1">
    <source>
        <dbReference type="HAMAP-Rule" id="MF_00086"/>
    </source>
</evidence>
<sequence>MAKHLFTSESVSEGHPDKIADQISDAVLDAILAQDPKARVACETYVKTGMVLVGGEVTTSAWVDIEELTRKTVREIGYVHSDMGFDADSCAVLNAIGKQSPDINQGVDRADPKEQGAGDQGLMFGYASNETDILMPAPITYAHALVKRQSEVRKDGTLPWLRPDAKSQVTFAYEDNKIVGIDAIVLSTQHSPDIAQADLIEGVMETIIKPVLPAQWLNKDTKYFINPTGRFVIGGPMGDCGLTGRKIIVDTYGGMARHGGGAFSGKDPSKVDRSAAYAARYVAKNIVAAGLADRCEIQVSYAIGVAEPTSISVETFGTGKVSEEVLIKLVRQHFDLRPYGLTEMLNLARPIYQATAAYGHFGRNEFPWEATDKADALRADAGL</sequence>